<keyword id="KW-0002">3D-structure</keyword>
<keyword id="KW-0007">Acetylation</keyword>
<keyword id="KW-0963">Cytoplasm</keyword>
<keyword id="KW-0325">Glycoprotein</keyword>
<keyword id="KW-0539">Nucleus</keyword>
<keyword id="KW-0597">Phosphoprotein</keyword>
<keyword id="KW-0647">Proteasome</keyword>
<keyword id="KW-1185">Reference proteome</keyword>
<proteinExistence type="evidence at protein level"/>
<evidence type="ECO:0000250" key="1"/>
<evidence type="ECO:0000250" key="2">
    <source>
        <dbReference type="UniProtKB" id="P28066"/>
    </source>
</evidence>
<evidence type="ECO:0000250" key="3">
    <source>
        <dbReference type="UniProtKB" id="Q9Z2U1"/>
    </source>
</evidence>
<evidence type="ECO:0000255" key="4">
    <source>
        <dbReference type="PROSITE-ProRule" id="PRU00808"/>
    </source>
</evidence>
<evidence type="ECO:0000269" key="5">
    <source>
    </source>
</evidence>
<evidence type="ECO:0007829" key="6">
    <source>
        <dbReference type="PDB" id="7DR7"/>
    </source>
</evidence>
<evidence type="ECO:0007829" key="7">
    <source>
        <dbReference type="PDB" id="8FZ5"/>
    </source>
</evidence>
<evidence type="ECO:0007829" key="8">
    <source>
        <dbReference type="PDB" id="8FZ6"/>
    </source>
</evidence>
<reference key="1">
    <citation type="journal article" date="2005" name="BMC Genomics">
        <title>Characterization of 954 bovine full-CDS cDNA sequences.</title>
        <authorList>
            <person name="Harhay G.P."/>
            <person name="Sonstegard T.S."/>
            <person name="Keele J.W."/>
            <person name="Heaton M.P."/>
            <person name="Clawson M.L."/>
            <person name="Snelling W.M."/>
            <person name="Wiedmann R.T."/>
            <person name="Van Tassell C.P."/>
            <person name="Smith T.P.L."/>
        </authorList>
    </citation>
    <scope>NUCLEOTIDE SEQUENCE [LARGE SCALE MRNA]</scope>
</reference>
<reference key="2">
    <citation type="submission" date="2005-08" db="EMBL/GenBank/DDBJ databases">
        <authorList>
            <consortium name="NIH - Mammalian Gene Collection (MGC) project"/>
        </authorList>
    </citation>
    <scope>NUCLEOTIDE SEQUENCE [LARGE SCALE MRNA]</scope>
    <source>
        <strain>Crossbred X Angus</strain>
        <tissue>Ileum</tissue>
    </source>
</reference>
<reference key="3">
    <citation type="journal article" date="2002" name="Structure">
        <title>The structure of the mammalian 20S proteasome at 2.75 A resolution.</title>
        <authorList>
            <person name="Unno M."/>
            <person name="Mizushima T."/>
            <person name="Morimoto Y."/>
            <person name="Tomisugi Y."/>
            <person name="Tanaka K."/>
            <person name="Yasuoka N."/>
            <person name="Tsukihara T."/>
        </authorList>
    </citation>
    <scope>X-RAY CRYSTALLOGRAPHY (2.75 ANGSTROMS) OF COMPLEX WITH THE 20S PROTEASOME</scope>
</reference>
<comment type="function">
    <text evidence="2">Component of the 20S core proteasome complex involved in the proteolytic degradation of most intracellular proteins. This complex plays numerous essential roles within the cell by associating with different regulatory particles. Associated with two 19S regulatory particles, forms the 26S proteasome and thus participates in the ATP-dependent degradation of ubiquitinated proteins. The 26S proteasome plays a key role in the maintenance of protein homeostasis by removing misfolded or damaged proteins that could impair cellular functions, and by removing proteins whose functions are no longer required. Associated with the PA200 or PA28, the 20S proteasome mediates ubiquitin-independent protein degradation. This type of proteolysis is required in several pathways including spermatogenesis (20S-PA200 complex) or generation of a subset of MHC class I-presented antigenic peptides (20S-PA28 complex).</text>
</comment>
<comment type="subunit">
    <text evidence="2 5">The 26S proteasome consists of a 20S proteasome core and two 19S regulatory subunits. The 20S proteasome core is a barrel-shaped complex made of 28 subunits that are arranged in four stacked rings. The two outer rings are each formed by seven alpha subunits, and the two inner rings are formed by seven beta subunits. The proteolytic activity is exerted by three beta-subunits PSMB5, PSMB6 and PSMB7 (PubMed:12015144). PSMA5 interacts directly with the PSMG1-PSMG2 heterodimer which promotes 20S proteasome assembly (By similarity).</text>
</comment>
<comment type="subcellular location">
    <subcellularLocation>
        <location evidence="2">Cytoplasm</location>
    </subcellularLocation>
    <subcellularLocation>
        <location evidence="2">Nucleus</location>
    </subcellularLocation>
    <text evidence="2">Translocated from the cytoplasm into the nucleus following interaction with AKIRIN2, which bridges the proteasome with the nuclear import receptor IPO9.</text>
</comment>
<comment type="similarity">
    <text evidence="4">Belongs to the peptidase T1A family.</text>
</comment>
<dbReference type="EMBL" id="BT021033">
    <property type="protein sequence ID" value="AAX09050.1"/>
    <property type="molecule type" value="mRNA"/>
</dbReference>
<dbReference type="EMBL" id="BC102343">
    <property type="protein sequence ID" value="AAI02344.1"/>
    <property type="molecule type" value="mRNA"/>
</dbReference>
<dbReference type="RefSeq" id="NP_001015566.1">
    <property type="nucleotide sequence ID" value="NM_001015566.1"/>
</dbReference>
<dbReference type="PDB" id="1IRU">
    <property type="method" value="X-ray"/>
    <property type="resolution" value="2.75 A"/>
    <property type="chains" value="E/S=1-241"/>
</dbReference>
<dbReference type="PDB" id="7DR6">
    <property type="method" value="EM"/>
    <property type="resolution" value="4.10 A"/>
    <property type="chains" value="P/b=1-241"/>
</dbReference>
<dbReference type="PDB" id="7DR7">
    <property type="method" value="EM"/>
    <property type="resolution" value="3.30 A"/>
    <property type="chains" value="B/P=1-241"/>
</dbReference>
<dbReference type="PDB" id="7DRW">
    <property type="method" value="EM"/>
    <property type="resolution" value="4.20 A"/>
    <property type="chains" value="E/R=1-241"/>
</dbReference>
<dbReference type="PDB" id="8AZK">
    <property type="method" value="EM"/>
    <property type="resolution" value="3.10 A"/>
    <property type="chains" value="E/S=1-241"/>
</dbReference>
<dbReference type="PDB" id="8FZ5">
    <property type="method" value="EM"/>
    <property type="resolution" value="2.23 A"/>
    <property type="chains" value="E/S=1-241"/>
</dbReference>
<dbReference type="PDB" id="8FZ6">
    <property type="method" value="EM"/>
    <property type="resolution" value="2.54 A"/>
    <property type="chains" value="E/S=1-241"/>
</dbReference>
<dbReference type="PDBsum" id="1IRU"/>
<dbReference type="PDBsum" id="7DR6"/>
<dbReference type="PDBsum" id="7DR7"/>
<dbReference type="PDBsum" id="7DRW"/>
<dbReference type="PDBsum" id="8AZK"/>
<dbReference type="PDBsum" id="8FZ5"/>
<dbReference type="PDBsum" id="8FZ6"/>
<dbReference type="EMDB" id="EMD-15767"/>
<dbReference type="EMDB" id="EMD-29603"/>
<dbReference type="EMDB" id="EMD-29604"/>
<dbReference type="EMDB" id="EMD-30824"/>
<dbReference type="EMDB" id="EMD-30825"/>
<dbReference type="EMDB" id="EMD-30828"/>
<dbReference type="SMR" id="Q5E987"/>
<dbReference type="FunCoup" id="Q5E987">
    <property type="interactions" value="3034"/>
</dbReference>
<dbReference type="STRING" id="9913.ENSBTAP00000027507"/>
<dbReference type="MEROPS" id="T01.975"/>
<dbReference type="GlyCosmos" id="Q5E987">
    <property type="glycosylation" value="1 site, No reported glycans"/>
</dbReference>
<dbReference type="GlyGen" id="Q5E987">
    <property type="glycosylation" value="1 site"/>
</dbReference>
<dbReference type="PaxDb" id="9913-ENSBTAP00000027507"/>
<dbReference type="PeptideAtlas" id="Q5E987"/>
<dbReference type="GeneID" id="510155"/>
<dbReference type="KEGG" id="bta:510155"/>
<dbReference type="CTD" id="5686"/>
<dbReference type="VEuPathDB" id="HostDB:ENSBTAG00000020641"/>
<dbReference type="eggNOG" id="KOG0176">
    <property type="taxonomic scope" value="Eukaryota"/>
</dbReference>
<dbReference type="HOGENOM" id="CLU_035750_4_2_1"/>
<dbReference type="InParanoid" id="Q5E987"/>
<dbReference type="OMA" id="RSMIDHA"/>
<dbReference type="OrthoDB" id="431557at2759"/>
<dbReference type="TreeFam" id="TF106211"/>
<dbReference type="Reactome" id="R-BTA-1169091">
    <property type="pathway name" value="Activation of NF-kappaB in B cells"/>
</dbReference>
<dbReference type="Reactome" id="R-BTA-1234176">
    <property type="pathway name" value="Oxygen-dependent proline hydroxylation of Hypoxia-inducible Factor Alpha"/>
</dbReference>
<dbReference type="Reactome" id="R-BTA-1236978">
    <property type="pathway name" value="Cross-presentation of soluble exogenous antigens (endosomes)"/>
</dbReference>
<dbReference type="Reactome" id="R-BTA-174084">
    <property type="pathway name" value="Autodegradation of Cdh1 by Cdh1:APC/C"/>
</dbReference>
<dbReference type="Reactome" id="R-BTA-174154">
    <property type="pathway name" value="APC/C:Cdc20 mediated degradation of Securin"/>
</dbReference>
<dbReference type="Reactome" id="R-BTA-174178">
    <property type="pathway name" value="APC/C:Cdh1 mediated degradation of Cdc20 and other APC/C:Cdh1 targeted proteins in late mitosis/early G1"/>
</dbReference>
<dbReference type="Reactome" id="R-BTA-174184">
    <property type="pathway name" value="Cdc20:Phospho-APC/C mediated degradation of Cyclin A"/>
</dbReference>
<dbReference type="Reactome" id="R-BTA-187577">
    <property type="pathway name" value="SCF(Skp2)-mediated degradation of p27/p21"/>
</dbReference>
<dbReference type="Reactome" id="R-BTA-195253">
    <property type="pathway name" value="Degradation of beta-catenin by the destruction complex"/>
</dbReference>
<dbReference type="Reactome" id="R-BTA-202424">
    <property type="pathway name" value="Downstream TCR signaling"/>
</dbReference>
<dbReference type="Reactome" id="R-BTA-2467813">
    <property type="pathway name" value="Separation of Sister Chromatids"/>
</dbReference>
<dbReference type="Reactome" id="R-BTA-2871837">
    <property type="pathway name" value="FCERI mediated NF-kB activation"/>
</dbReference>
<dbReference type="Reactome" id="R-BTA-349425">
    <property type="pathway name" value="Autodegradation of the E3 ubiquitin ligase COP1"/>
</dbReference>
<dbReference type="Reactome" id="R-BTA-350562">
    <property type="pathway name" value="Regulation of ornithine decarboxylase (ODC)"/>
</dbReference>
<dbReference type="Reactome" id="R-BTA-382556">
    <property type="pathway name" value="ABC-family proteins mediated transport"/>
</dbReference>
<dbReference type="Reactome" id="R-BTA-450408">
    <property type="pathway name" value="AUF1 (hnRNP D0) binds and destabilizes mRNA"/>
</dbReference>
<dbReference type="Reactome" id="R-BTA-4608870">
    <property type="pathway name" value="Asymmetric localization of PCP proteins"/>
</dbReference>
<dbReference type="Reactome" id="R-BTA-4641257">
    <property type="pathway name" value="Degradation of AXIN"/>
</dbReference>
<dbReference type="Reactome" id="R-BTA-4641258">
    <property type="pathway name" value="Degradation of DVL"/>
</dbReference>
<dbReference type="Reactome" id="R-BTA-5358346">
    <property type="pathway name" value="Hedgehog ligand biogenesis"/>
</dbReference>
<dbReference type="Reactome" id="R-BTA-5607761">
    <property type="pathway name" value="Dectin-1 mediated noncanonical NF-kB signaling"/>
</dbReference>
<dbReference type="Reactome" id="R-BTA-5607764">
    <property type="pathway name" value="CLEC7A (Dectin-1) signaling"/>
</dbReference>
<dbReference type="Reactome" id="R-BTA-5610780">
    <property type="pathway name" value="Degradation of GLI1 by the proteasome"/>
</dbReference>
<dbReference type="Reactome" id="R-BTA-5610785">
    <property type="pathway name" value="GLI3 is processed to GLI3R by the proteasome"/>
</dbReference>
<dbReference type="Reactome" id="R-BTA-5632684">
    <property type="pathway name" value="Hedgehog 'on' state"/>
</dbReference>
<dbReference type="Reactome" id="R-BTA-5668541">
    <property type="pathway name" value="TNFR2 non-canonical NF-kB pathway"/>
</dbReference>
<dbReference type="Reactome" id="R-BTA-5676590">
    <property type="pathway name" value="NIK--&gt;noncanonical NF-kB signaling"/>
</dbReference>
<dbReference type="Reactome" id="R-BTA-5687128">
    <property type="pathway name" value="MAPK6/MAPK4 signaling"/>
</dbReference>
<dbReference type="Reactome" id="R-BTA-5689603">
    <property type="pathway name" value="UCH proteinases"/>
</dbReference>
<dbReference type="Reactome" id="R-BTA-5689880">
    <property type="pathway name" value="Ub-specific processing proteases"/>
</dbReference>
<dbReference type="Reactome" id="R-BTA-6798695">
    <property type="pathway name" value="Neutrophil degranulation"/>
</dbReference>
<dbReference type="Reactome" id="R-BTA-68867">
    <property type="pathway name" value="Assembly of the pre-replicative complex"/>
</dbReference>
<dbReference type="Reactome" id="R-BTA-68949">
    <property type="pathway name" value="Orc1 removal from chromatin"/>
</dbReference>
<dbReference type="Reactome" id="R-BTA-69017">
    <property type="pathway name" value="CDK-mediated phosphorylation and removal of Cdc6"/>
</dbReference>
<dbReference type="Reactome" id="R-BTA-69481">
    <property type="pathway name" value="G2/M Checkpoints"/>
</dbReference>
<dbReference type="Reactome" id="R-BTA-69601">
    <property type="pathway name" value="Ubiquitin Mediated Degradation of Phosphorylated Cdc25A"/>
</dbReference>
<dbReference type="Reactome" id="R-BTA-75815">
    <property type="pathway name" value="Ubiquitin-dependent degradation of Cyclin D"/>
</dbReference>
<dbReference type="Reactome" id="R-BTA-8852276">
    <property type="pathway name" value="The role of GTSE1 in G2/M progression after G2 checkpoint"/>
</dbReference>
<dbReference type="Reactome" id="R-BTA-8854050">
    <property type="pathway name" value="FBXL7 down-regulates AURKA during mitotic entry and in early mitosis"/>
</dbReference>
<dbReference type="Reactome" id="R-BTA-8939236">
    <property type="pathway name" value="RUNX1 regulates transcription of genes involved in differentiation of HSCs"/>
</dbReference>
<dbReference type="Reactome" id="R-BTA-8939902">
    <property type="pathway name" value="Regulation of RUNX2 expression and activity"/>
</dbReference>
<dbReference type="Reactome" id="R-BTA-8941858">
    <property type="pathway name" value="Regulation of RUNX3 expression and activity"/>
</dbReference>
<dbReference type="Reactome" id="R-BTA-8948751">
    <property type="pathway name" value="Regulation of PTEN stability and activity"/>
</dbReference>
<dbReference type="Reactome" id="R-BTA-8951664">
    <property type="pathway name" value="Neddylation"/>
</dbReference>
<dbReference type="Reactome" id="R-BTA-9020702">
    <property type="pathway name" value="Interleukin-1 signaling"/>
</dbReference>
<dbReference type="Reactome" id="R-BTA-9755511">
    <property type="pathway name" value="KEAP1-NFE2L2 pathway"/>
</dbReference>
<dbReference type="Reactome" id="R-BTA-9762114">
    <property type="pathway name" value="GSK3B and BTRC:CUL1-mediated-degradation of NFE2L2"/>
</dbReference>
<dbReference type="Reactome" id="R-BTA-983168">
    <property type="pathway name" value="Antigen processing: Ubiquitination &amp; Proteasome degradation"/>
</dbReference>
<dbReference type="Reactome" id="R-BTA-9907900">
    <property type="pathway name" value="Proteasome assembly"/>
</dbReference>
<dbReference type="EvolutionaryTrace" id="Q5E987"/>
<dbReference type="Proteomes" id="UP000009136">
    <property type="component" value="Chromosome 3"/>
</dbReference>
<dbReference type="Bgee" id="ENSBTAG00000020641">
    <property type="expression patterns" value="Expressed in oocyte and 107 other cell types or tissues"/>
</dbReference>
<dbReference type="GO" id="GO:0005829">
    <property type="term" value="C:cytosol"/>
    <property type="evidence" value="ECO:0000304"/>
    <property type="project" value="Reactome"/>
</dbReference>
<dbReference type="GO" id="GO:0005634">
    <property type="term" value="C:nucleus"/>
    <property type="evidence" value="ECO:0000318"/>
    <property type="project" value="GO_Central"/>
</dbReference>
<dbReference type="GO" id="GO:0005839">
    <property type="term" value="C:proteasome core complex"/>
    <property type="evidence" value="ECO:0000250"/>
    <property type="project" value="UniProtKB"/>
</dbReference>
<dbReference type="GO" id="GO:0019773">
    <property type="term" value="C:proteasome core complex, alpha-subunit complex"/>
    <property type="evidence" value="ECO:0000250"/>
    <property type="project" value="UniProtKB"/>
</dbReference>
<dbReference type="GO" id="GO:0043161">
    <property type="term" value="P:proteasome-mediated ubiquitin-dependent protein catabolic process"/>
    <property type="evidence" value="ECO:0000318"/>
    <property type="project" value="GO_Central"/>
</dbReference>
<dbReference type="CDD" id="cd03753">
    <property type="entry name" value="proteasome_alpha_type_5"/>
    <property type="match status" value="1"/>
</dbReference>
<dbReference type="FunFam" id="3.60.20.10:FF:000019">
    <property type="entry name" value="Proteasome subunit alpha type"/>
    <property type="match status" value="1"/>
</dbReference>
<dbReference type="Gene3D" id="3.60.20.10">
    <property type="entry name" value="Glutamine Phosphoribosylpyrophosphate, subunit 1, domain 1"/>
    <property type="match status" value="1"/>
</dbReference>
<dbReference type="InterPro" id="IPR029055">
    <property type="entry name" value="Ntn_hydrolases_N"/>
</dbReference>
<dbReference type="InterPro" id="IPR050115">
    <property type="entry name" value="Proteasome_alpha"/>
</dbReference>
<dbReference type="InterPro" id="IPR023332">
    <property type="entry name" value="Proteasome_alpha-type"/>
</dbReference>
<dbReference type="InterPro" id="IPR033812">
    <property type="entry name" value="Proteasome_alpha_type_5"/>
</dbReference>
<dbReference type="InterPro" id="IPR000426">
    <property type="entry name" value="Proteasome_asu_N"/>
</dbReference>
<dbReference type="InterPro" id="IPR001353">
    <property type="entry name" value="Proteasome_sua/b"/>
</dbReference>
<dbReference type="NCBIfam" id="NF003075">
    <property type="entry name" value="PRK03996.1"/>
    <property type="match status" value="1"/>
</dbReference>
<dbReference type="PANTHER" id="PTHR11599">
    <property type="entry name" value="PROTEASOME SUBUNIT ALPHA/BETA"/>
    <property type="match status" value="1"/>
</dbReference>
<dbReference type="Pfam" id="PF00227">
    <property type="entry name" value="Proteasome"/>
    <property type="match status" value="1"/>
</dbReference>
<dbReference type="Pfam" id="PF10584">
    <property type="entry name" value="Proteasome_A_N"/>
    <property type="match status" value="1"/>
</dbReference>
<dbReference type="SMART" id="SM00948">
    <property type="entry name" value="Proteasome_A_N"/>
    <property type="match status" value="1"/>
</dbReference>
<dbReference type="SUPFAM" id="SSF56235">
    <property type="entry name" value="N-terminal nucleophile aminohydrolases (Ntn hydrolases)"/>
    <property type="match status" value="1"/>
</dbReference>
<dbReference type="PROSITE" id="PS00388">
    <property type="entry name" value="PROTEASOME_ALPHA_1"/>
    <property type="match status" value="1"/>
</dbReference>
<dbReference type="PROSITE" id="PS51475">
    <property type="entry name" value="PROTEASOME_ALPHA_2"/>
    <property type="match status" value="1"/>
</dbReference>
<accession>Q5E987</accession>
<organism>
    <name type="scientific">Bos taurus</name>
    <name type="common">Bovine</name>
    <dbReference type="NCBI Taxonomy" id="9913"/>
    <lineage>
        <taxon>Eukaryota</taxon>
        <taxon>Metazoa</taxon>
        <taxon>Chordata</taxon>
        <taxon>Craniata</taxon>
        <taxon>Vertebrata</taxon>
        <taxon>Euteleostomi</taxon>
        <taxon>Mammalia</taxon>
        <taxon>Eutheria</taxon>
        <taxon>Laurasiatheria</taxon>
        <taxon>Artiodactyla</taxon>
        <taxon>Ruminantia</taxon>
        <taxon>Pecora</taxon>
        <taxon>Bovidae</taxon>
        <taxon>Bovinae</taxon>
        <taxon>Bos</taxon>
    </lineage>
</organism>
<sequence>MFLTRSEYDRGVNTFSPEGRLFQVEYAIEAIKLGSTAIGIQTSEGVCLAVEKRITSPLMEPSSIEKIVEIDAHIGCAMSGLIADAKTLIDKARVETQNHWFTYNETMTVESVTQAVSNLALQFGEEDADPGAMSRPFGVALLFGGVDEKGPQLFHMDPSGTFVQCDARAIGSASEGAQSSLQEVYHKSMTLKEAIKSSLIILKQVMEEKLNATNIELATVQPGQNFHMFTKEELEEVIKDI</sequence>
<feature type="chain" id="PRO_0000274033" description="Proteasome subunit alpha type-5">
    <location>
        <begin position="1"/>
        <end position="241"/>
    </location>
</feature>
<feature type="modified residue" description="N-acetylmethionine" evidence="3">
    <location>
        <position position="1"/>
    </location>
</feature>
<feature type="modified residue" description="Phosphoserine" evidence="2">
    <location>
        <position position="16"/>
    </location>
</feature>
<feature type="modified residue" description="Phosphothreonine" evidence="2">
    <location>
        <position position="55"/>
    </location>
</feature>
<feature type="modified residue" description="Phosphoserine" evidence="2">
    <location>
        <position position="56"/>
    </location>
</feature>
<feature type="modified residue" description="Phosphoserine" evidence="2">
    <location>
        <position position="63"/>
    </location>
</feature>
<feature type="glycosylation site" description="O-linked (GlcNAc) serine" evidence="1">
    <location>
        <position position="198"/>
    </location>
</feature>
<feature type="strand" evidence="7">
    <location>
        <begin position="8"/>
        <end position="10"/>
    </location>
</feature>
<feature type="strand" evidence="6">
    <location>
        <begin position="19"/>
        <end position="21"/>
    </location>
</feature>
<feature type="helix" evidence="7">
    <location>
        <begin position="22"/>
        <end position="31"/>
    </location>
</feature>
<feature type="strand" evidence="7">
    <location>
        <begin position="37"/>
        <end position="41"/>
    </location>
</feature>
<feature type="strand" evidence="7">
    <location>
        <begin position="46"/>
        <end position="51"/>
    </location>
</feature>
<feature type="helix" evidence="7">
    <location>
        <begin position="61"/>
        <end position="63"/>
    </location>
</feature>
<feature type="strand" evidence="7">
    <location>
        <begin position="66"/>
        <end position="71"/>
    </location>
</feature>
<feature type="strand" evidence="7">
    <location>
        <begin position="74"/>
        <end position="80"/>
    </location>
</feature>
<feature type="helix" evidence="7">
    <location>
        <begin position="82"/>
        <end position="103"/>
    </location>
</feature>
<feature type="helix" evidence="7">
    <location>
        <begin position="109"/>
        <end position="117"/>
    </location>
</feature>
<feature type="turn" evidence="7">
    <location>
        <begin position="118"/>
        <end position="121"/>
    </location>
</feature>
<feature type="strand" evidence="7">
    <location>
        <begin position="125"/>
        <end position="127"/>
    </location>
</feature>
<feature type="strand" evidence="8">
    <location>
        <begin position="133"/>
        <end position="135"/>
    </location>
</feature>
<feature type="strand" evidence="7">
    <location>
        <begin position="139"/>
        <end position="147"/>
    </location>
</feature>
<feature type="strand" evidence="7">
    <location>
        <begin position="150"/>
        <end position="156"/>
    </location>
</feature>
<feature type="strand" evidence="7">
    <location>
        <begin position="162"/>
        <end position="171"/>
    </location>
</feature>
<feature type="helix" evidence="7">
    <location>
        <begin position="174"/>
        <end position="184"/>
    </location>
</feature>
<feature type="helix" evidence="7">
    <location>
        <begin position="191"/>
        <end position="205"/>
    </location>
</feature>
<feature type="strand" evidence="6">
    <location>
        <begin position="206"/>
        <end position="208"/>
    </location>
</feature>
<feature type="turn" evidence="7">
    <location>
        <begin position="212"/>
        <end position="214"/>
    </location>
</feature>
<feature type="strand" evidence="7">
    <location>
        <begin position="215"/>
        <end position="221"/>
    </location>
</feature>
<feature type="strand" evidence="7">
    <location>
        <begin position="224"/>
        <end position="228"/>
    </location>
</feature>
<feature type="helix" evidence="7">
    <location>
        <begin position="231"/>
        <end position="238"/>
    </location>
</feature>
<gene>
    <name type="primary">PSMA5</name>
</gene>
<name>PSA5_BOVIN</name>
<protein>
    <recommendedName>
        <fullName>Proteasome subunit alpha type-5</fullName>
    </recommendedName>
</protein>